<organism>
    <name type="scientific">Rhizorhabdus wittichii (strain DSM 6014 / CCUG 31198 / JCM 15750 / NBRC 105917 / EY 4224 / RW1)</name>
    <name type="common">Sphingomonas wittichii</name>
    <dbReference type="NCBI Taxonomy" id="392499"/>
    <lineage>
        <taxon>Bacteria</taxon>
        <taxon>Pseudomonadati</taxon>
        <taxon>Pseudomonadota</taxon>
        <taxon>Alphaproteobacteria</taxon>
        <taxon>Sphingomonadales</taxon>
        <taxon>Sphingomonadaceae</taxon>
        <taxon>Rhizorhabdus</taxon>
    </lineage>
</organism>
<accession>A5VFX8</accession>
<sequence length="291" mass="32996">MATKPLSFQRLILTLHDYWSDQGCLILQPYDMEMGAGTFHPSTTLRALGPQPWKAAYVQPSRRPTDGRYGENPNRLGHYYQYQVILKPSPANLQELYLGSLERIGIDPLAHDIRFVEDDWESPTLGAWGLGWEVWCDGMEVTQFTYFQQVGGFDCKPVAGELTYGLERLAMYIQGVDRVYDLAFNDEGVTYGDVFLENERQFSAYNFEAANTDTLFKQFTQAADECRALLERDRPLPLPAYDQAIKASHIFNTLQARGVISVAERQAYIGRVRDLAKGACAAWMAHNGWEA</sequence>
<gene>
    <name evidence="1" type="primary">glyQ</name>
    <name type="ordered locus">Swit_4857</name>
</gene>
<evidence type="ECO:0000255" key="1">
    <source>
        <dbReference type="HAMAP-Rule" id="MF_00254"/>
    </source>
</evidence>
<feature type="chain" id="PRO_1000125555" description="Glycine--tRNA ligase alpha subunit">
    <location>
        <begin position="1"/>
        <end position="291"/>
    </location>
</feature>
<dbReference type="EC" id="6.1.1.14" evidence="1"/>
<dbReference type="EMBL" id="CP000699">
    <property type="protein sequence ID" value="ABQ71194.1"/>
    <property type="molecule type" value="Genomic_DNA"/>
</dbReference>
<dbReference type="SMR" id="A5VFX8"/>
<dbReference type="STRING" id="392499.Swit_4857"/>
<dbReference type="PaxDb" id="392499-Swit_4857"/>
<dbReference type="KEGG" id="swi:Swit_4857"/>
<dbReference type="eggNOG" id="COG0752">
    <property type="taxonomic scope" value="Bacteria"/>
</dbReference>
<dbReference type="HOGENOM" id="CLU_057066_1_0_5"/>
<dbReference type="OrthoDB" id="9802183at2"/>
<dbReference type="Proteomes" id="UP000001989">
    <property type="component" value="Chromosome"/>
</dbReference>
<dbReference type="GO" id="GO:0005829">
    <property type="term" value="C:cytosol"/>
    <property type="evidence" value="ECO:0007669"/>
    <property type="project" value="TreeGrafter"/>
</dbReference>
<dbReference type="GO" id="GO:0005524">
    <property type="term" value="F:ATP binding"/>
    <property type="evidence" value="ECO:0007669"/>
    <property type="project" value="UniProtKB-UniRule"/>
</dbReference>
<dbReference type="GO" id="GO:0004820">
    <property type="term" value="F:glycine-tRNA ligase activity"/>
    <property type="evidence" value="ECO:0007669"/>
    <property type="project" value="UniProtKB-UniRule"/>
</dbReference>
<dbReference type="GO" id="GO:0006426">
    <property type="term" value="P:glycyl-tRNA aminoacylation"/>
    <property type="evidence" value="ECO:0007669"/>
    <property type="project" value="UniProtKB-UniRule"/>
</dbReference>
<dbReference type="CDD" id="cd00733">
    <property type="entry name" value="GlyRS_alpha_core"/>
    <property type="match status" value="1"/>
</dbReference>
<dbReference type="FunFam" id="3.30.930.10:FF:000006">
    <property type="entry name" value="Glycine--tRNA ligase alpha subunit"/>
    <property type="match status" value="1"/>
</dbReference>
<dbReference type="Gene3D" id="3.30.930.10">
    <property type="entry name" value="Bira Bifunctional Protein, Domain 2"/>
    <property type="match status" value="1"/>
</dbReference>
<dbReference type="Gene3D" id="1.20.58.180">
    <property type="entry name" value="Class II aaRS and biotin synthetases, domain 2"/>
    <property type="match status" value="1"/>
</dbReference>
<dbReference type="HAMAP" id="MF_00254">
    <property type="entry name" value="Gly_tRNA_synth_alpha"/>
    <property type="match status" value="1"/>
</dbReference>
<dbReference type="InterPro" id="IPR045864">
    <property type="entry name" value="aa-tRNA-synth_II/BPL/LPL"/>
</dbReference>
<dbReference type="InterPro" id="IPR006194">
    <property type="entry name" value="Gly-tRNA-synth_heterodimer"/>
</dbReference>
<dbReference type="InterPro" id="IPR002310">
    <property type="entry name" value="Gly-tRNA_ligase_asu"/>
</dbReference>
<dbReference type="NCBIfam" id="TIGR00388">
    <property type="entry name" value="glyQ"/>
    <property type="match status" value="1"/>
</dbReference>
<dbReference type="NCBIfam" id="NF006827">
    <property type="entry name" value="PRK09348.1"/>
    <property type="match status" value="1"/>
</dbReference>
<dbReference type="PANTHER" id="PTHR30075:SF2">
    <property type="entry name" value="GLYCINE--TRNA LIGASE, CHLOROPLASTIC_MITOCHONDRIAL 2"/>
    <property type="match status" value="1"/>
</dbReference>
<dbReference type="PANTHER" id="PTHR30075">
    <property type="entry name" value="GLYCYL-TRNA SYNTHETASE"/>
    <property type="match status" value="1"/>
</dbReference>
<dbReference type="Pfam" id="PF02091">
    <property type="entry name" value="tRNA-synt_2e"/>
    <property type="match status" value="1"/>
</dbReference>
<dbReference type="PRINTS" id="PR01044">
    <property type="entry name" value="TRNASYNTHGA"/>
</dbReference>
<dbReference type="SUPFAM" id="SSF55681">
    <property type="entry name" value="Class II aaRS and biotin synthetases"/>
    <property type="match status" value="1"/>
</dbReference>
<dbReference type="PROSITE" id="PS50861">
    <property type="entry name" value="AA_TRNA_LIGASE_II_GLYAB"/>
    <property type="match status" value="1"/>
</dbReference>
<reference key="1">
    <citation type="journal article" date="2010" name="J. Bacteriol.">
        <title>Genome sequence of the dioxin-mineralizing bacterium Sphingomonas wittichii RW1.</title>
        <authorList>
            <person name="Miller T.R."/>
            <person name="Delcher A.L."/>
            <person name="Salzberg S.L."/>
            <person name="Saunders E."/>
            <person name="Detter J.C."/>
            <person name="Halden R.U."/>
        </authorList>
    </citation>
    <scope>NUCLEOTIDE SEQUENCE [LARGE SCALE GENOMIC DNA]</scope>
    <source>
        <strain>DSM 6014 / CCUG 31198 / JCM 15750 / NBRC 105917 / EY 4224 / RW1</strain>
    </source>
</reference>
<protein>
    <recommendedName>
        <fullName evidence="1">Glycine--tRNA ligase alpha subunit</fullName>
        <ecNumber evidence="1">6.1.1.14</ecNumber>
    </recommendedName>
    <alternativeName>
        <fullName evidence="1">Glycyl-tRNA synthetase alpha subunit</fullName>
        <shortName evidence="1">GlyRS</shortName>
    </alternativeName>
</protein>
<comment type="catalytic activity">
    <reaction evidence="1">
        <text>tRNA(Gly) + glycine + ATP = glycyl-tRNA(Gly) + AMP + diphosphate</text>
        <dbReference type="Rhea" id="RHEA:16013"/>
        <dbReference type="Rhea" id="RHEA-COMP:9664"/>
        <dbReference type="Rhea" id="RHEA-COMP:9683"/>
        <dbReference type="ChEBI" id="CHEBI:30616"/>
        <dbReference type="ChEBI" id="CHEBI:33019"/>
        <dbReference type="ChEBI" id="CHEBI:57305"/>
        <dbReference type="ChEBI" id="CHEBI:78442"/>
        <dbReference type="ChEBI" id="CHEBI:78522"/>
        <dbReference type="ChEBI" id="CHEBI:456215"/>
        <dbReference type="EC" id="6.1.1.14"/>
    </reaction>
</comment>
<comment type="subunit">
    <text evidence="1">Tetramer of two alpha and two beta subunits.</text>
</comment>
<comment type="subcellular location">
    <subcellularLocation>
        <location evidence="1">Cytoplasm</location>
    </subcellularLocation>
</comment>
<comment type="similarity">
    <text evidence="1">Belongs to the class-II aminoacyl-tRNA synthetase family.</text>
</comment>
<name>SYGA_RHIWR</name>
<proteinExistence type="inferred from homology"/>
<keyword id="KW-0030">Aminoacyl-tRNA synthetase</keyword>
<keyword id="KW-0067">ATP-binding</keyword>
<keyword id="KW-0963">Cytoplasm</keyword>
<keyword id="KW-0436">Ligase</keyword>
<keyword id="KW-0547">Nucleotide-binding</keyword>
<keyword id="KW-0648">Protein biosynthesis</keyword>
<keyword id="KW-1185">Reference proteome</keyword>